<gene>
    <name type="primary">AKHSDH2</name>
</gene>
<evidence type="ECO:0000250" key="1">
    <source>
        <dbReference type="UniProtKB" id="F9VNG5"/>
    </source>
</evidence>
<evidence type="ECO:0000250" key="2">
    <source>
        <dbReference type="UniProtKB" id="O58802"/>
    </source>
</evidence>
<evidence type="ECO:0000250" key="3">
    <source>
        <dbReference type="UniProtKB" id="P31116"/>
    </source>
</evidence>
<evidence type="ECO:0000250" key="4">
    <source>
        <dbReference type="UniProtKB" id="Q9SA18"/>
    </source>
</evidence>
<evidence type="ECO:0000255" key="5"/>
<evidence type="ECO:0000255" key="6">
    <source>
        <dbReference type="PROSITE-ProRule" id="PRU01007"/>
    </source>
</evidence>
<evidence type="ECO:0000305" key="7"/>
<comment type="function">
    <text evidence="4">Bifunctional aspartate kinase and homoserine dehydrogenase that catalyzes the first and the third steps toward the synthesis of lysine, methionine and threonine from aspartate.</text>
</comment>
<comment type="catalytic activity">
    <reaction evidence="4">
        <text>L-homoserine + NADP(+) = L-aspartate 4-semialdehyde + NADPH + H(+)</text>
        <dbReference type="Rhea" id="RHEA:15761"/>
        <dbReference type="ChEBI" id="CHEBI:15378"/>
        <dbReference type="ChEBI" id="CHEBI:57476"/>
        <dbReference type="ChEBI" id="CHEBI:57783"/>
        <dbReference type="ChEBI" id="CHEBI:58349"/>
        <dbReference type="ChEBI" id="CHEBI:537519"/>
        <dbReference type="EC" id="1.1.1.3"/>
    </reaction>
    <physiologicalReaction direction="right-to-left" evidence="4">
        <dbReference type="Rhea" id="RHEA:15763"/>
    </physiologicalReaction>
</comment>
<comment type="catalytic activity">
    <reaction evidence="4">
        <text>L-homoserine + NAD(+) = L-aspartate 4-semialdehyde + NADH + H(+)</text>
        <dbReference type="Rhea" id="RHEA:15757"/>
        <dbReference type="ChEBI" id="CHEBI:15378"/>
        <dbReference type="ChEBI" id="CHEBI:57476"/>
        <dbReference type="ChEBI" id="CHEBI:57540"/>
        <dbReference type="ChEBI" id="CHEBI:57945"/>
        <dbReference type="ChEBI" id="CHEBI:537519"/>
        <dbReference type="EC" id="1.1.1.3"/>
    </reaction>
    <physiologicalReaction direction="right-to-left" evidence="4">
        <dbReference type="Rhea" id="RHEA:15759"/>
    </physiologicalReaction>
</comment>
<comment type="catalytic activity">
    <reaction evidence="4">
        <text>L-aspartate + ATP = 4-phospho-L-aspartate + ADP</text>
        <dbReference type="Rhea" id="RHEA:23776"/>
        <dbReference type="ChEBI" id="CHEBI:29991"/>
        <dbReference type="ChEBI" id="CHEBI:30616"/>
        <dbReference type="ChEBI" id="CHEBI:57535"/>
        <dbReference type="ChEBI" id="CHEBI:456216"/>
        <dbReference type="EC" id="2.7.2.4"/>
    </reaction>
    <physiologicalReaction direction="left-to-right" evidence="4">
        <dbReference type="Rhea" id="RHEA:23777"/>
    </physiologicalReaction>
</comment>
<comment type="cofactor">
    <cofactor evidence="3">
        <name>a metal cation</name>
        <dbReference type="ChEBI" id="CHEBI:25213"/>
    </cofactor>
    <text evidence="3">A sodium ion is seen in the structure; a metal ion may subtly affect the relative position of the nucleotide-binding region to influence enzyme activity, and could increase the stability of the enzyme.</text>
</comment>
<comment type="pathway">
    <text evidence="4">Amino-acid biosynthesis; L-lysine biosynthesis via DAP pathway; (S)-tetrahydrodipicolinate from L-aspartate: step 1/4.</text>
</comment>
<comment type="pathway">
    <text evidence="4">Amino-acid biosynthesis; L-methionine biosynthesis via de novo pathway; L-homoserine from L-aspartate: step 1/3.</text>
</comment>
<comment type="pathway">
    <text evidence="4">Amino-acid biosynthesis; L-methionine biosynthesis via de novo pathway; L-homoserine from L-aspartate: step 3/3.</text>
</comment>
<comment type="pathway">
    <text evidence="4">Amino-acid biosynthesis; L-threonine biosynthesis; L-threonine from L-aspartate: step 1/5.</text>
</comment>
<comment type="pathway">
    <text evidence="4">Amino-acid biosynthesis; L-threonine biosynthesis; L-threonine from L-aspartate: step 3/5.</text>
</comment>
<comment type="subunit">
    <text evidence="7">Homo- or heterodimer.</text>
</comment>
<comment type="subcellular location">
    <subcellularLocation>
        <location>Plastid</location>
        <location>Chloroplast</location>
    </subcellularLocation>
</comment>
<comment type="similarity">
    <text evidence="7">In the N-terminal section; belongs to the aspartokinase family.</text>
</comment>
<comment type="similarity">
    <text evidence="7">In the C-terminal section; belongs to the homoserine dehydrogenase family.</text>
</comment>
<reference key="1">
    <citation type="journal article" date="1994" name="Plant Physiol.">
        <title>Molecular genetics of the maize (Zea mays L.) aspartate kinase-homoserine dehydrogenase gene family.</title>
        <authorList>
            <person name="Muehlbauer G.J."/>
            <person name="Somers D.A."/>
            <person name="Matthews B.F."/>
            <person name="Gengenbach B.G."/>
        </authorList>
    </citation>
    <scope>NUCLEOTIDE SEQUENCE [MRNA]</scope>
    <source>
        <tissue>Seedling leaf</tissue>
    </source>
</reference>
<name>AKH2_MAIZE</name>
<accession>P49080</accession>
<organism>
    <name type="scientific">Zea mays</name>
    <name type="common">Maize</name>
    <dbReference type="NCBI Taxonomy" id="4577"/>
    <lineage>
        <taxon>Eukaryota</taxon>
        <taxon>Viridiplantae</taxon>
        <taxon>Streptophyta</taxon>
        <taxon>Embryophyta</taxon>
        <taxon>Tracheophyta</taxon>
        <taxon>Spermatophyta</taxon>
        <taxon>Magnoliopsida</taxon>
        <taxon>Liliopsida</taxon>
        <taxon>Poales</taxon>
        <taxon>Poaceae</taxon>
        <taxon>PACMAD clade</taxon>
        <taxon>Panicoideae</taxon>
        <taxon>Andropogonodae</taxon>
        <taxon>Andropogoneae</taxon>
        <taxon>Tripsacinae</taxon>
        <taxon>Zea</taxon>
    </lineage>
</organism>
<keyword id="KW-0028">Amino-acid biosynthesis</keyword>
<keyword id="KW-0067">ATP-binding</keyword>
<keyword id="KW-0150">Chloroplast</keyword>
<keyword id="KW-0418">Kinase</keyword>
<keyword id="KW-0457">Lysine biosynthesis</keyword>
<keyword id="KW-0479">Metal-binding</keyword>
<keyword id="KW-0486">Methionine biosynthesis</keyword>
<keyword id="KW-0511">Multifunctional enzyme</keyword>
<keyword id="KW-0520">NAD</keyword>
<keyword id="KW-0521">NADP</keyword>
<keyword id="KW-0547">Nucleotide-binding</keyword>
<keyword id="KW-0560">Oxidoreductase</keyword>
<keyword id="KW-0934">Plastid</keyword>
<keyword id="KW-1185">Reference proteome</keyword>
<keyword id="KW-0677">Repeat</keyword>
<keyword id="KW-0915">Sodium</keyword>
<keyword id="KW-0791">Threonine biosynthesis</keyword>
<keyword id="KW-0808">Transferase</keyword>
<keyword id="KW-0809">Transit peptide</keyword>
<proteinExistence type="evidence at transcript level"/>
<sequence length="917" mass="99583">MQGLAVSCQLPPAAAAARWRPRASSSNREAVLQCWKYELSQDHYLGGPLRIGQSQGSLHRHRSTNFLRPAAAAISVEQDEVNTYLPKGDMWSVHKFGGTCMGTPKRIQCVANIVLGDSSERKLIIVSAMSKVTDMMYNLVQKAQSRDDSYAIALAEVFEKHMTAAKDLLDGEDLARFLSQLHSDVSNLRAMLRAIYIAGHATESFSDFVVGHGELWSAQMLSYAIKKSGAPCSWMDTREVLVVTPSGCNQVDPDYLECEKRLQKWFSRQPAEIIVATGFIASTAGNIPTTLKRDGSDFSAAIVGSLVRARQVTIWTDVDGVFSADPRKVSEAVILSTLSYQEAWEMSYFGANVLHPRTIIPVMKDNIPIVIRNMFNLSAPGTMICKQPANENGDLDACVKSFATVDNLALVNVEGTGMAGVPGTASAIFSAVKDVGANVIMISQASSEHSVCFAVPEKEVAVVSAELHDRFREALAAGRLSKVEVINGCSILAAVGLRMASTPGVSAILFDALAKANINVRAIAQGCSEYNITVVLKQQDCVRALRAAHSRFFLSKTTLAVGIIGPGLIGGALLNQLKNQTAVLKENMNIDLRVIGITGSSTMLLSDTGIDLTQWKQLLQKEAEPADIGSFVHHLSDNHVFPNKVLVDCTADTSVASHYYDWLKKGIHVITPNKKANSGPLDQYLKLRTMQRASYTHYFYEATVGAGLPIISTLRGLLETGDKILRIEGIFSGTLSYIFNNFEGTRAFSDVVAEAREAGYTEPDPRDDLSGTDVARKVVVLARESGLRLELSDIPVKSLVPETLASCSSADEFMQKLPSFDEDWARQRSDAEAAGEVLRYVGALDAVNRSGQVELRRYRRDHPFAQLSGSDNIIAFTTSRYKEQPLIVRGPGAGAEVTAGGVFCDILRLASYLGAPS</sequence>
<dbReference type="EC" id="2.7.2.4"/>
<dbReference type="EC" id="1.1.1.3"/>
<dbReference type="EMBL" id="L33913">
    <property type="protein sequence ID" value="AAA74361.1"/>
    <property type="molecule type" value="mRNA"/>
</dbReference>
<dbReference type="PIR" id="T02954">
    <property type="entry name" value="T02954"/>
</dbReference>
<dbReference type="RefSeq" id="NP_001105691.1">
    <property type="nucleotide sequence ID" value="NM_001112221.1"/>
</dbReference>
<dbReference type="RefSeq" id="XP_008668651.1">
    <property type="nucleotide sequence ID" value="XM_008670429.1"/>
</dbReference>
<dbReference type="SMR" id="P49080"/>
<dbReference type="FunCoup" id="P49080">
    <property type="interactions" value="586"/>
</dbReference>
<dbReference type="STRING" id="4577.P49080"/>
<dbReference type="PaxDb" id="4577-GRMZM2G104546_P02"/>
<dbReference type="MaizeGDB" id="66609"/>
<dbReference type="eggNOG" id="ENOG502QQBK">
    <property type="taxonomic scope" value="Eukaryota"/>
</dbReference>
<dbReference type="HOGENOM" id="CLU_009116_7_1_1"/>
<dbReference type="InParanoid" id="P49080"/>
<dbReference type="UniPathway" id="UPA00034">
    <property type="reaction ID" value="UER00015"/>
</dbReference>
<dbReference type="UniPathway" id="UPA00050">
    <property type="reaction ID" value="UER00063"/>
</dbReference>
<dbReference type="UniPathway" id="UPA00050">
    <property type="reaction ID" value="UER00461"/>
</dbReference>
<dbReference type="UniPathway" id="UPA00051">
    <property type="reaction ID" value="UER00462"/>
</dbReference>
<dbReference type="UniPathway" id="UPA00051">
    <property type="reaction ID" value="UER00465"/>
</dbReference>
<dbReference type="Proteomes" id="UP000007305">
    <property type="component" value="Unplaced"/>
</dbReference>
<dbReference type="ExpressionAtlas" id="P49080">
    <property type="expression patterns" value="baseline and differential"/>
</dbReference>
<dbReference type="GO" id="GO:0009507">
    <property type="term" value="C:chloroplast"/>
    <property type="evidence" value="ECO:0007669"/>
    <property type="project" value="UniProtKB-SubCell"/>
</dbReference>
<dbReference type="GO" id="GO:0004072">
    <property type="term" value="F:aspartate kinase activity"/>
    <property type="evidence" value="ECO:0007669"/>
    <property type="project" value="UniProtKB-EC"/>
</dbReference>
<dbReference type="GO" id="GO:0005524">
    <property type="term" value="F:ATP binding"/>
    <property type="evidence" value="ECO:0007669"/>
    <property type="project" value="UniProtKB-KW"/>
</dbReference>
<dbReference type="GO" id="GO:0004412">
    <property type="term" value="F:homoserine dehydrogenase activity"/>
    <property type="evidence" value="ECO:0000250"/>
    <property type="project" value="UniProtKB"/>
</dbReference>
<dbReference type="GO" id="GO:0046872">
    <property type="term" value="F:metal ion binding"/>
    <property type="evidence" value="ECO:0007669"/>
    <property type="project" value="UniProtKB-KW"/>
</dbReference>
<dbReference type="GO" id="GO:0070403">
    <property type="term" value="F:NAD+ binding"/>
    <property type="evidence" value="ECO:0000250"/>
    <property type="project" value="UniProtKB"/>
</dbReference>
<dbReference type="GO" id="GO:0050661">
    <property type="term" value="F:NADP binding"/>
    <property type="evidence" value="ECO:0007669"/>
    <property type="project" value="InterPro"/>
</dbReference>
<dbReference type="GO" id="GO:0009067">
    <property type="term" value="P:aspartate family amino acid biosynthetic process"/>
    <property type="evidence" value="ECO:0000318"/>
    <property type="project" value="GO_Central"/>
</dbReference>
<dbReference type="GO" id="GO:0009090">
    <property type="term" value="P:homoserine biosynthetic process"/>
    <property type="evidence" value="ECO:0000318"/>
    <property type="project" value="GO_Central"/>
</dbReference>
<dbReference type="GO" id="GO:0009089">
    <property type="term" value="P:lysine biosynthetic process via diaminopimelate"/>
    <property type="evidence" value="ECO:0000250"/>
    <property type="project" value="UniProtKB"/>
</dbReference>
<dbReference type="GO" id="GO:0009086">
    <property type="term" value="P:methionine biosynthetic process"/>
    <property type="evidence" value="ECO:0000250"/>
    <property type="project" value="UniProtKB"/>
</dbReference>
<dbReference type="GO" id="GO:0009088">
    <property type="term" value="P:threonine biosynthetic process"/>
    <property type="evidence" value="ECO:0000250"/>
    <property type="project" value="UniProtKB"/>
</dbReference>
<dbReference type="CDD" id="cd04257">
    <property type="entry name" value="AAK_AK-HSDH"/>
    <property type="match status" value="1"/>
</dbReference>
<dbReference type="CDD" id="cd04921">
    <property type="entry name" value="ACT_AKi-HSDH-ThrA-like_1"/>
    <property type="match status" value="1"/>
</dbReference>
<dbReference type="CDD" id="cd04922">
    <property type="entry name" value="ACT_AKi-HSDH-ThrA_2"/>
    <property type="match status" value="1"/>
</dbReference>
<dbReference type="FunFam" id="3.30.2130.10:FF:000001">
    <property type="entry name" value="Bifunctional aspartokinase/homoserine dehydrogenase"/>
    <property type="match status" value="1"/>
</dbReference>
<dbReference type="FunFam" id="3.30.360.10:FF:000006">
    <property type="entry name" value="Bifunctional aspartokinase/homoserine dehydrogenase"/>
    <property type="match status" value="1"/>
</dbReference>
<dbReference type="FunFam" id="3.40.1160.10:FF:000017">
    <property type="entry name" value="Bifunctional aspartokinase/homoserine dehydrogenase"/>
    <property type="match status" value="1"/>
</dbReference>
<dbReference type="FunFam" id="3.40.50.720:FF:000083">
    <property type="entry name" value="Bifunctional aspartokinase/homoserine dehydrogenase"/>
    <property type="match status" value="1"/>
</dbReference>
<dbReference type="Gene3D" id="3.40.1160.10">
    <property type="entry name" value="Acetylglutamate kinase-like"/>
    <property type="match status" value="1"/>
</dbReference>
<dbReference type="Gene3D" id="3.30.360.10">
    <property type="entry name" value="Dihydrodipicolinate Reductase, domain 2"/>
    <property type="match status" value="1"/>
</dbReference>
<dbReference type="Gene3D" id="3.40.50.720">
    <property type="entry name" value="NAD(P)-binding Rossmann-like Domain"/>
    <property type="match status" value="1"/>
</dbReference>
<dbReference type="Gene3D" id="3.30.2130.10">
    <property type="entry name" value="VC0802-like"/>
    <property type="match status" value="1"/>
</dbReference>
<dbReference type="InterPro" id="IPR036393">
    <property type="entry name" value="AceGlu_kinase-like_sf"/>
</dbReference>
<dbReference type="InterPro" id="IPR045865">
    <property type="entry name" value="ACT-like_dom_sf"/>
</dbReference>
<dbReference type="InterPro" id="IPR054352">
    <property type="entry name" value="ACT_Aspartokinase"/>
</dbReference>
<dbReference type="InterPro" id="IPR002912">
    <property type="entry name" value="ACT_dom"/>
</dbReference>
<dbReference type="InterPro" id="IPR041743">
    <property type="entry name" value="AK-HSDH_N"/>
</dbReference>
<dbReference type="InterPro" id="IPR001048">
    <property type="entry name" value="Asp/Glu/Uridylate_kinase"/>
</dbReference>
<dbReference type="InterPro" id="IPR005106">
    <property type="entry name" value="Asp/hSer_DH_NAD-bd"/>
</dbReference>
<dbReference type="InterPro" id="IPR001341">
    <property type="entry name" value="Asp_kinase"/>
</dbReference>
<dbReference type="InterPro" id="IPR018042">
    <property type="entry name" value="Aspartate_kinase_CS"/>
</dbReference>
<dbReference type="InterPro" id="IPR011147">
    <property type="entry name" value="Bifunc_Aspkin/hSer_DH"/>
</dbReference>
<dbReference type="InterPro" id="IPR001342">
    <property type="entry name" value="HDH_cat"/>
</dbReference>
<dbReference type="InterPro" id="IPR019811">
    <property type="entry name" value="HDH_CS"/>
</dbReference>
<dbReference type="InterPro" id="IPR036291">
    <property type="entry name" value="NAD(P)-bd_dom_sf"/>
</dbReference>
<dbReference type="NCBIfam" id="TIGR00657">
    <property type="entry name" value="asp_kinases"/>
    <property type="match status" value="1"/>
</dbReference>
<dbReference type="NCBIfam" id="NF006959">
    <property type="entry name" value="PRK09436.1"/>
    <property type="match status" value="1"/>
</dbReference>
<dbReference type="NCBIfam" id="NF007003">
    <property type="entry name" value="PRK09466.1"/>
    <property type="match status" value="1"/>
</dbReference>
<dbReference type="PANTHER" id="PTHR43070">
    <property type="match status" value="1"/>
</dbReference>
<dbReference type="PANTHER" id="PTHR43070:SF9">
    <property type="entry name" value="BIFUNCTIONAL ASPARTOKINASE_HOMOSERINE DEHYDROGENASE 2, CHLOROPLASTIC"/>
    <property type="match status" value="1"/>
</dbReference>
<dbReference type="Pfam" id="PF00696">
    <property type="entry name" value="AA_kinase"/>
    <property type="match status" value="1"/>
</dbReference>
<dbReference type="Pfam" id="PF22468">
    <property type="entry name" value="ACT_9"/>
    <property type="match status" value="2"/>
</dbReference>
<dbReference type="Pfam" id="PF00742">
    <property type="entry name" value="Homoserine_dh"/>
    <property type="match status" value="1"/>
</dbReference>
<dbReference type="Pfam" id="PF03447">
    <property type="entry name" value="NAD_binding_3"/>
    <property type="match status" value="1"/>
</dbReference>
<dbReference type="SUPFAM" id="SSF55021">
    <property type="entry name" value="ACT-like"/>
    <property type="match status" value="2"/>
</dbReference>
<dbReference type="SUPFAM" id="SSF53633">
    <property type="entry name" value="Carbamate kinase-like"/>
    <property type="match status" value="1"/>
</dbReference>
<dbReference type="SUPFAM" id="SSF55347">
    <property type="entry name" value="Glyceraldehyde-3-phosphate dehydrogenase-like, C-terminal domain"/>
    <property type="match status" value="1"/>
</dbReference>
<dbReference type="SUPFAM" id="SSF51735">
    <property type="entry name" value="NAD(P)-binding Rossmann-fold domains"/>
    <property type="match status" value="1"/>
</dbReference>
<dbReference type="PROSITE" id="PS51671">
    <property type="entry name" value="ACT"/>
    <property type="match status" value="2"/>
</dbReference>
<dbReference type="PROSITE" id="PS00324">
    <property type="entry name" value="ASPARTOKINASE"/>
    <property type="match status" value="1"/>
</dbReference>
<dbReference type="PROSITE" id="PS01042">
    <property type="entry name" value="HOMOSER_DHGENASE"/>
    <property type="match status" value="1"/>
</dbReference>
<feature type="transit peptide" description="Chloroplast" evidence="5">
    <location>
        <begin position="1"/>
        <end position="89"/>
    </location>
</feature>
<feature type="chain" id="PRO_0000002393" description="Bifunctional aspartokinase/homoserine dehydrogenase 2, chloroplastic">
    <location>
        <begin position="90"/>
        <end position="917"/>
    </location>
</feature>
<feature type="domain" description="ACT 1" evidence="6">
    <location>
        <begin position="413"/>
        <end position="488"/>
    </location>
</feature>
<feature type="domain" description="ACT 2" evidence="6">
    <location>
        <begin position="494"/>
        <end position="571"/>
    </location>
</feature>
<feature type="region of interest" description="Aspartokinase">
    <location>
        <begin position="90"/>
        <end position="338"/>
    </location>
</feature>
<feature type="region of interest" description="Interface">
    <location>
        <begin position="339"/>
        <end position="563"/>
    </location>
</feature>
<feature type="region of interest" description="Homoserine dehydrogenase">
    <location>
        <begin position="564"/>
        <end position="917"/>
    </location>
</feature>
<feature type="active site" description="Proton donor" evidence="5">
    <location>
        <position position="777"/>
    </location>
</feature>
<feature type="binding site" evidence="3">
    <location>
        <position position="569"/>
    </location>
    <ligand>
        <name>NAD(+)</name>
        <dbReference type="ChEBI" id="CHEBI:57540"/>
    </ligand>
</feature>
<feature type="binding site" evidence="1">
    <location>
        <position position="569"/>
    </location>
    <ligand>
        <name>NADP(+)</name>
        <dbReference type="ChEBI" id="CHEBI:58349"/>
    </ligand>
</feature>
<feature type="binding site" evidence="2">
    <location>
        <position position="569"/>
    </location>
    <ligand>
        <name>NADPH</name>
        <dbReference type="ChEBI" id="CHEBI:57783"/>
    </ligand>
</feature>
<feature type="binding site" evidence="3">
    <location>
        <position position="650"/>
    </location>
    <ligand>
        <name>NAD(+)</name>
        <dbReference type="ChEBI" id="CHEBI:57540"/>
    </ligand>
</feature>
<feature type="binding site" evidence="1">
    <location>
        <position position="650"/>
    </location>
    <ligand>
        <name>NADP(+)</name>
        <dbReference type="ChEBI" id="CHEBI:58349"/>
    </ligand>
</feature>
<feature type="binding site" evidence="2">
    <location>
        <position position="650"/>
    </location>
    <ligand>
        <name>NADPH</name>
        <dbReference type="ChEBI" id="CHEBI:57783"/>
    </ligand>
</feature>
<feature type="binding site" evidence="1">
    <location>
        <position position="674"/>
    </location>
    <ligand>
        <name>NADP(+)</name>
        <dbReference type="ChEBI" id="CHEBI:58349"/>
    </ligand>
</feature>
<feature type="binding site" evidence="2">
    <location>
        <position position="674"/>
    </location>
    <ligand>
        <name>NADPH</name>
        <dbReference type="ChEBI" id="CHEBI:57783"/>
    </ligand>
</feature>
<feature type="binding site" evidence="3">
    <location>
        <position position="701"/>
    </location>
    <ligand>
        <name>Na(+)</name>
        <dbReference type="ChEBI" id="CHEBI:29101"/>
    </ligand>
</feature>
<feature type="binding site" evidence="3">
    <location>
        <position position="704"/>
    </location>
    <ligand>
        <name>Na(+)</name>
        <dbReference type="ChEBI" id="CHEBI:29101"/>
    </ligand>
</feature>
<feature type="binding site" evidence="3">
    <location>
        <position position="706"/>
    </location>
    <ligand>
        <name>Na(+)</name>
        <dbReference type="ChEBI" id="CHEBI:29101"/>
    </ligand>
</feature>
<feature type="binding site" evidence="3">
    <location>
        <position position="708"/>
    </location>
    <ligand>
        <name>Na(+)</name>
        <dbReference type="ChEBI" id="CHEBI:29101"/>
    </ligand>
</feature>
<feature type="binding site" evidence="1">
    <location>
        <position position="759"/>
    </location>
    <ligand>
        <name>NADP(+)</name>
        <dbReference type="ChEBI" id="CHEBI:58349"/>
    </ligand>
</feature>
<feature type="binding site" evidence="3">
    <location>
        <position position="762"/>
    </location>
    <ligand>
        <name>L-homoserine</name>
        <dbReference type="ChEBI" id="CHEBI:57476"/>
    </ligand>
</feature>
<feature type="binding site" evidence="1">
    <location>
        <position position="762"/>
    </location>
    <ligand>
        <name>NADP(+)</name>
        <dbReference type="ChEBI" id="CHEBI:58349"/>
    </ligand>
</feature>
<feature type="binding site" evidence="3">
    <location>
        <position position="773"/>
    </location>
    <ligand>
        <name>L-homoserine</name>
        <dbReference type="ChEBI" id="CHEBI:57476"/>
    </ligand>
</feature>
<feature type="binding site" evidence="3">
    <location>
        <position position="894"/>
    </location>
    <ligand>
        <name>NAD(+)</name>
        <dbReference type="ChEBI" id="CHEBI:57540"/>
    </ligand>
</feature>
<feature type="binding site" evidence="1">
    <location>
        <position position="894"/>
    </location>
    <ligand>
        <name>NADP(+)</name>
        <dbReference type="ChEBI" id="CHEBI:58349"/>
    </ligand>
</feature>
<feature type="binding site" evidence="2">
    <location>
        <position position="894"/>
    </location>
    <ligand>
        <name>NADPH</name>
        <dbReference type="ChEBI" id="CHEBI:57783"/>
    </ligand>
</feature>
<protein>
    <recommendedName>
        <fullName>Bifunctional aspartokinase/homoserine dehydrogenase 2, chloroplastic</fullName>
        <shortName>AK-HD 2</shortName>
        <shortName>AK-HSDH 2</shortName>
    </recommendedName>
    <domain>
        <recommendedName>
            <fullName>Aspartokinase</fullName>
            <ecNumber>2.7.2.4</ecNumber>
        </recommendedName>
    </domain>
    <domain>
        <recommendedName>
            <fullName>Homoserine dehydrogenase</fullName>
            <ecNumber>1.1.1.3</ecNumber>
        </recommendedName>
    </domain>
</protein>